<evidence type="ECO:0000250" key="1"/>
<evidence type="ECO:0000255" key="2">
    <source>
        <dbReference type="PROSITE-ProRule" id="PRU10092"/>
    </source>
</evidence>
<evidence type="ECO:0000255" key="3">
    <source>
        <dbReference type="PROSITE-ProRule" id="PRU10093"/>
    </source>
</evidence>
<evidence type="ECO:0000256" key="4">
    <source>
        <dbReference type="SAM" id="MobiDB-lite"/>
    </source>
</evidence>
<evidence type="ECO:0000305" key="5"/>
<gene>
    <name type="primary">USP17L5</name>
</gene>
<feature type="chain" id="PRO_0000331647" description="Ubiquitin carboxyl-terminal hydrolase 17-like protein 5">
    <location>
        <begin position="1"/>
        <end position="530"/>
    </location>
</feature>
<feature type="domain" description="USP">
    <location>
        <begin position="80"/>
        <end position="375"/>
    </location>
</feature>
<feature type="region of interest" description="Disordered" evidence="4">
    <location>
        <begin position="382"/>
        <end position="412"/>
    </location>
</feature>
<feature type="region of interest" description="Disordered" evidence="4">
    <location>
        <begin position="477"/>
        <end position="530"/>
    </location>
</feature>
<feature type="compositionally biased region" description="Basic and acidic residues" evidence="4">
    <location>
        <begin position="382"/>
        <end position="392"/>
    </location>
</feature>
<feature type="compositionally biased region" description="Basic and acidic residues" evidence="4">
    <location>
        <begin position="398"/>
        <end position="412"/>
    </location>
</feature>
<feature type="compositionally biased region" description="Polar residues" evidence="4">
    <location>
        <begin position="493"/>
        <end position="505"/>
    </location>
</feature>
<feature type="compositionally biased region" description="Basic residues" evidence="4">
    <location>
        <begin position="510"/>
        <end position="524"/>
    </location>
</feature>
<feature type="active site" description="Nucleophile" evidence="2 3">
    <location>
        <position position="89"/>
    </location>
</feature>
<feature type="active site" description="Proton acceptor" evidence="2 3">
    <location>
        <position position="334"/>
    </location>
</feature>
<comment type="function">
    <text evidence="1">Deubiquitinating enzyme that removes conjugated ubiquitin from specific proteins to regulate different cellular processes that may include cell proliferation, progression through the cell cycle, apoptosis, cell migration, and the cellular response to viral infection.</text>
</comment>
<comment type="catalytic activity">
    <reaction>
        <text>Thiol-dependent hydrolysis of ester, thioester, amide, peptide and isopeptide bonds formed by the C-terminal Gly of ubiquitin (a 76-residue protein attached to proteins as an intracellular targeting signal).</text>
        <dbReference type="EC" id="3.4.19.12"/>
    </reaction>
</comment>
<comment type="subcellular location">
    <subcellularLocation>
        <location evidence="1">Nucleus</location>
    </subcellularLocation>
    <subcellularLocation>
        <location evidence="1">Endoplasmic reticulum</location>
    </subcellularLocation>
</comment>
<comment type="similarity">
    <text evidence="5">Belongs to the peptidase C19 family. USP17 subfamily.</text>
</comment>
<comment type="caution">
    <text evidence="5">The RS447 megasatellite DNA is a highly polymorphic conserved tandem repetitive sequence which contains a copy of the USP17 gene. It is present with an interindividual variation in copy number, ranging from 20 to 103, and can be found in the genome both on chromosome 4 and chromosome 8. The high similarity between the UPS17-like genes makes impossible to clearly assign data to one of the genes of the family. Oligonucleotides designed in RNAi experiments are for instance not specific of a given UPS17-like gene.</text>
</comment>
<name>U17L5_HUMAN</name>
<keyword id="KW-0053">Apoptosis</keyword>
<keyword id="KW-0256">Endoplasmic reticulum</keyword>
<keyword id="KW-0378">Hydrolase</keyword>
<keyword id="KW-0539">Nucleus</keyword>
<keyword id="KW-0645">Protease</keyword>
<keyword id="KW-1185">Reference proteome</keyword>
<keyword id="KW-0788">Thiol protease</keyword>
<keyword id="KW-0833">Ubl conjugation pathway</keyword>
<protein>
    <recommendedName>
        <fullName>Ubiquitin carboxyl-terminal hydrolase 17-like protein 5</fullName>
        <ecNumber>3.4.19.12</ecNumber>
    </recommendedName>
    <alternativeName>
        <fullName>Deubiquitinating enzyme 17-like protein 5</fullName>
    </alternativeName>
    <alternativeName>
        <fullName>Ubiquitin thioesterase 17-like protein 5</fullName>
    </alternativeName>
    <alternativeName>
        <fullName>Ubiquitin-specific-processing protease 17-like protein 5</fullName>
    </alternativeName>
</protein>
<sequence>MEDDSLYLRGEWQFNHFSKLTSSRPDAAFAEIQRTSLPEKSPLSCETRVDLCDDLAPVARQLAPREKLPLSSRRPAAVGAGLQNMGNTCYVNASLQCLTYTPPLANYMLSREHSQTCHRHKGCMLCTMQAHITRALHNPGHVIQPSQALAAGFHRGKQEDAHEFLMFTVDAMKKACLPGHKQVDHHSKDTTLIHQIFGGYWRSQIKCLHCHGISDTFDPYLDIALDIQAAQSVQQALEQLAKPEELNGENAYHCGVCLQRAPASKTLTLHTSAKVLILVLKRFSDVTGNKIAKNVQYPECLDMQPYMSQPNTGPLVYVLYAVLVHAGWSCHNGHYFSYVKAQEGQWYKMDDAEVTASSITSVLSQQAYVLFYIQKSEWERHSESVSRGREPRALGAEDTDRRATQGELKRDHPCLQAPELDEHLVERATQESTLDHWKFLQEQNKTKPEFNVRKVEGTLPPDVLVIHQSKYKCGMKNHHPEQQSSLLNLSSSTPTHQESMNTGTLASLRGRARRSKGKNKHSKRALLVCQ</sequence>
<accession>A8MUK1</accession>
<dbReference type="EC" id="3.4.19.12"/>
<dbReference type="EMBL" id="AC116655">
    <property type="status" value="NOT_ANNOTATED_CDS"/>
    <property type="molecule type" value="Genomic_DNA"/>
</dbReference>
<dbReference type="CCDS" id="CCDS59467.1"/>
<dbReference type="RefSeq" id="NP_001229258.1">
    <property type="nucleotide sequence ID" value="NM_001242329.1"/>
</dbReference>
<dbReference type="SMR" id="A8MUK1"/>
<dbReference type="BioGRID" id="608813">
    <property type="interactions" value="1"/>
</dbReference>
<dbReference type="FunCoup" id="A8MUK1">
    <property type="interactions" value="447"/>
</dbReference>
<dbReference type="IntAct" id="A8MUK1">
    <property type="interactions" value="1"/>
</dbReference>
<dbReference type="STRING" id="9606.ENSP00000425955"/>
<dbReference type="MEROPS" id="C19.078"/>
<dbReference type="MEROPS" id="C19.A86"/>
<dbReference type="iPTMnet" id="A8MUK1"/>
<dbReference type="PhosphoSitePlus" id="A8MUK1"/>
<dbReference type="BioMuta" id="USP17L5"/>
<dbReference type="jPOST" id="A8MUK1"/>
<dbReference type="MassIVE" id="A8MUK1"/>
<dbReference type="PaxDb" id="9606-ENSP00000425955"/>
<dbReference type="Antibodypedia" id="61294">
    <property type="antibodies" value="15 antibodies from 8 providers"/>
</dbReference>
<dbReference type="DNASU" id="728386"/>
<dbReference type="Ensembl" id="ENST00000507227.1">
    <property type="protein sequence ID" value="ENSP00000425955.1"/>
    <property type="gene ID" value="ENSG00000227140.3"/>
</dbReference>
<dbReference type="GeneID" id="728386"/>
<dbReference type="KEGG" id="hsa:728386"/>
<dbReference type="MANE-Select" id="ENST00000507227.1">
    <property type="protein sequence ID" value="ENSP00000425955.1"/>
    <property type="RefSeq nucleotide sequence ID" value="NM_001242329.1"/>
    <property type="RefSeq protein sequence ID" value="NP_001229258.1"/>
</dbReference>
<dbReference type="UCSC" id="uc021xlo.1">
    <property type="organism name" value="human"/>
</dbReference>
<dbReference type="AGR" id="HGNC:37177"/>
<dbReference type="CTD" id="728386"/>
<dbReference type="GeneCards" id="USP17L5"/>
<dbReference type="HGNC" id="HGNC:37177">
    <property type="gene designation" value="USP17L5"/>
</dbReference>
<dbReference type="HPA" id="ENSG00000227140">
    <property type="expression patterns" value="Not detected"/>
</dbReference>
<dbReference type="neXtProt" id="NX_A8MUK1"/>
<dbReference type="PharmGKB" id="PA165664776"/>
<dbReference type="VEuPathDB" id="HostDB:ENSG00000227140"/>
<dbReference type="eggNOG" id="KOG1865">
    <property type="taxonomic scope" value="Eukaryota"/>
</dbReference>
<dbReference type="GeneTree" id="ENSGT00940000161948"/>
<dbReference type="HOGENOM" id="CLU_008279_10_0_1"/>
<dbReference type="InParanoid" id="A8MUK1"/>
<dbReference type="OMA" id="IMLWRKG"/>
<dbReference type="OrthoDB" id="8832at9604"/>
<dbReference type="PAN-GO" id="A8MUK1">
    <property type="GO annotations" value="6 GO annotations based on evolutionary models"/>
</dbReference>
<dbReference type="PhylomeDB" id="A8MUK1"/>
<dbReference type="TreeFam" id="TF315281"/>
<dbReference type="PathwayCommons" id="A8MUK1"/>
<dbReference type="Reactome" id="R-HSA-5689880">
    <property type="pathway name" value="Ub-specific processing proteases"/>
</dbReference>
<dbReference type="SignaLink" id="A8MUK1"/>
<dbReference type="BioGRID-ORCS" id="728386">
    <property type="hits" value="409 hits in 922 CRISPR screens"/>
</dbReference>
<dbReference type="GenomeRNAi" id="728386"/>
<dbReference type="Pharos" id="A8MUK1">
    <property type="development level" value="Tdark"/>
</dbReference>
<dbReference type="PRO" id="PR:A8MUK1"/>
<dbReference type="Proteomes" id="UP000005640">
    <property type="component" value="Chromosome 4"/>
</dbReference>
<dbReference type="RNAct" id="A8MUK1">
    <property type="molecule type" value="protein"/>
</dbReference>
<dbReference type="Bgee" id="ENSG00000227140">
    <property type="expression patterns" value="Expressed in blood"/>
</dbReference>
<dbReference type="GO" id="GO:0005829">
    <property type="term" value="C:cytosol"/>
    <property type="evidence" value="ECO:0000318"/>
    <property type="project" value="GO_Central"/>
</dbReference>
<dbReference type="GO" id="GO:0005783">
    <property type="term" value="C:endoplasmic reticulum"/>
    <property type="evidence" value="ECO:0007669"/>
    <property type="project" value="UniProtKB-SubCell"/>
</dbReference>
<dbReference type="GO" id="GO:0005634">
    <property type="term" value="C:nucleus"/>
    <property type="evidence" value="ECO:0000318"/>
    <property type="project" value="GO_Central"/>
</dbReference>
<dbReference type="GO" id="GO:0004843">
    <property type="term" value="F:cysteine-type deubiquitinase activity"/>
    <property type="evidence" value="ECO:0000318"/>
    <property type="project" value="GO_Central"/>
</dbReference>
<dbReference type="GO" id="GO:0006915">
    <property type="term" value="P:apoptotic process"/>
    <property type="evidence" value="ECO:0007669"/>
    <property type="project" value="UniProtKB-KW"/>
</dbReference>
<dbReference type="GO" id="GO:0016579">
    <property type="term" value="P:protein deubiquitination"/>
    <property type="evidence" value="ECO:0007669"/>
    <property type="project" value="InterPro"/>
</dbReference>
<dbReference type="GO" id="GO:0006508">
    <property type="term" value="P:proteolysis"/>
    <property type="evidence" value="ECO:0007669"/>
    <property type="project" value="UniProtKB-KW"/>
</dbReference>
<dbReference type="GO" id="GO:0042981">
    <property type="term" value="P:regulation of apoptotic process"/>
    <property type="evidence" value="ECO:0000318"/>
    <property type="project" value="GO_Central"/>
</dbReference>
<dbReference type="GO" id="GO:0031647">
    <property type="term" value="P:regulation of protein stability"/>
    <property type="evidence" value="ECO:0000318"/>
    <property type="project" value="GO_Central"/>
</dbReference>
<dbReference type="CDD" id="cd02661">
    <property type="entry name" value="Peptidase_C19E"/>
    <property type="match status" value="1"/>
</dbReference>
<dbReference type="FunFam" id="3.90.70.10:FF:000070">
    <property type="entry name" value="Ubiquitin carboxyl-terminal hydrolase 17-like protein 17"/>
    <property type="match status" value="1"/>
</dbReference>
<dbReference type="Gene3D" id="3.90.70.10">
    <property type="entry name" value="Cysteine proteinases"/>
    <property type="match status" value="1"/>
</dbReference>
<dbReference type="InterPro" id="IPR006861">
    <property type="entry name" value="HABP4_PAIRBP1-bd"/>
</dbReference>
<dbReference type="InterPro" id="IPR038765">
    <property type="entry name" value="Papain-like_cys_pep_sf"/>
</dbReference>
<dbReference type="InterPro" id="IPR050164">
    <property type="entry name" value="Peptidase_C19"/>
</dbReference>
<dbReference type="InterPro" id="IPR001394">
    <property type="entry name" value="Peptidase_C19_UCH"/>
</dbReference>
<dbReference type="InterPro" id="IPR018200">
    <property type="entry name" value="USP_CS"/>
</dbReference>
<dbReference type="InterPro" id="IPR028889">
    <property type="entry name" value="USP_dom"/>
</dbReference>
<dbReference type="PANTHER" id="PTHR24006:SF651">
    <property type="entry name" value="INACTIVE UBIQUITIN CARBOXYL-TERMINAL HYDROLASE 17-LIKE PROTEIN 4-RELATED"/>
    <property type="match status" value="1"/>
</dbReference>
<dbReference type="PANTHER" id="PTHR24006">
    <property type="entry name" value="UBIQUITIN CARBOXYL-TERMINAL HYDROLASE"/>
    <property type="match status" value="1"/>
</dbReference>
<dbReference type="Pfam" id="PF04774">
    <property type="entry name" value="HABP4_PAI-RBP1"/>
    <property type="match status" value="1"/>
</dbReference>
<dbReference type="Pfam" id="PF00443">
    <property type="entry name" value="UCH"/>
    <property type="match status" value="1"/>
</dbReference>
<dbReference type="SUPFAM" id="SSF54001">
    <property type="entry name" value="Cysteine proteinases"/>
    <property type="match status" value="1"/>
</dbReference>
<dbReference type="PROSITE" id="PS00972">
    <property type="entry name" value="USP_1"/>
    <property type="match status" value="1"/>
</dbReference>
<dbReference type="PROSITE" id="PS00973">
    <property type="entry name" value="USP_2"/>
    <property type="match status" value="1"/>
</dbReference>
<dbReference type="PROSITE" id="PS50235">
    <property type="entry name" value="USP_3"/>
    <property type="match status" value="1"/>
</dbReference>
<reference key="1">
    <citation type="journal article" date="2005" name="Nature">
        <title>Generation and annotation of the DNA sequences of human chromosomes 2 and 4.</title>
        <authorList>
            <person name="Hillier L.W."/>
            <person name="Graves T.A."/>
            <person name="Fulton R.S."/>
            <person name="Fulton L.A."/>
            <person name="Pepin K.H."/>
            <person name="Minx P."/>
            <person name="Wagner-McPherson C."/>
            <person name="Layman D."/>
            <person name="Wylie K."/>
            <person name="Sekhon M."/>
            <person name="Becker M.C."/>
            <person name="Fewell G.A."/>
            <person name="Delehaunty K.D."/>
            <person name="Miner T.L."/>
            <person name="Nash W.E."/>
            <person name="Kremitzki C."/>
            <person name="Oddy L."/>
            <person name="Du H."/>
            <person name="Sun H."/>
            <person name="Bradshaw-Cordum H."/>
            <person name="Ali J."/>
            <person name="Carter J."/>
            <person name="Cordes M."/>
            <person name="Harris A."/>
            <person name="Isak A."/>
            <person name="van Brunt A."/>
            <person name="Nguyen C."/>
            <person name="Du F."/>
            <person name="Courtney L."/>
            <person name="Kalicki J."/>
            <person name="Ozersky P."/>
            <person name="Abbott S."/>
            <person name="Armstrong J."/>
            <person name="Belter E.A."/>
            <person name="Caruso L."/>
            <person name="Cedroni M."/>
            <person name="Cotton M."/>
            <person name="Davidson T."/>
            <person name="Desai A."/>
            <person name="Elliott G."/>
            <person name="Erb T."/>
            <person name="Fronick C."/>
            <person name="Gaige T."/>
            <person name="Haakenson W."/>
            <person name="Haglund K."/>
            <person name="Holmes A."/>
            <person name="Harkins R."/>
            <person name="Kim K."/>
            <person name="Kruchowski S.S."/>
            <person name="Strong C.M."/>
            <person name="Grewal N."/>
            <person name="Goyea E."/>
            <person name="Hou S."/>
            <person name="Levy A."/>
            <person name="Martinka S."/>
            <person name="Mead K."/>
            <person name="McLellan M.D."/>
            <person name="Meyer R."/>
            <person name="Randall-Maher J."/>
            <person name="Tomlinson C."/>
            <person name="Dauphin-Kohlberg S."/>
            <person name="Kozlowicz-Reilly A."/>
            <person name="Shah N."/>
            <person name="Swearengen-Shahid S."/>
            <person name="Snider J."/>
            <person name="Strong J.T."/>
            <person name="Thompson J."/>
            <person name="Yoakum M."/>
            <person name="Leonard S."/>
            <person name="Pearman C."/>
            <person name="Trani L."/>
            <person name="Radionenko M."/>
            <person name="Waligorski J.E."/>
            <person name="Wang C."/>
            <person name="Rock S.M."/>
            <person name="Tin-Wollam A.-M."/>
            <person name="Maupin R."/>
            <person name="Latreille P."/>
            <person name="Wendl M.C."/>
            <person name="Yang S.-P."/>
            <person name="Pohl C."/>
            <person name="Wallis J.W."/>
            <person name="Spieth J."/>
            <person name="Bieri T.A."/>
            <person name="Berkowicz N."/>
            <person name="Nelson J.O."/>
            <person name="Osborne J."/>
            <person name="Ding L."/>
            <person name="Meyer R."/>
            <person name="Sabo A."/>
            <person name="Shotland Y."/>
            <person name="Sinha P."/>
            <person name="Wohldmann P.E."/>
            <person name="Cook L.L."/>
            <person name="Hickenbotham M.T."/>
            <person name="Eldred J."/>
            <person name="Williams D."/>
            <person name="Jones T.A."/>
            <person name="She X."/>
            <person name="Ciccarelli F.D."/>
            <person name="Izaurralde E."/>
            <person name="Taylor J."/>
            <person name="Schmutz J."/>
            <person name="Myers R.M."/>
            <person name="Cox D.R."/>
            <person name="Huang X."/>
            <person name="McPherson J.D."/>
            <person name="Mardis E.R."/>
            <person name="Clifton S.W."/>
            <person name="Warren W.C."/>
            <person name="Chinwalla A.T."/>
            <person name="Eddy S.R."/>
            <person name="Marra M.A."/>
            <person name="Ovcharenko I."/>
            <person name="Furey T.S."/>
            <person name="Miller W."/>
            <person name="Eichler E.E."/>
            <person name="Bork P."/>
            <person name="Suyama M."/>
            <person name="Torrents D."/>
            <person name="Waterston R.H."/>
            <person name="Wilson R.K."/>
        </authorList>
    </citation>
    <scope>NUCLEOTIDE SEQUENCE [LARGE SCALE GENOMIC DNA]</scope>
</reference>
<reference key="2">
    <citation type="journal article" date="2005" name="Genomics">
        <title>The DUB/USP17 deubiquitinating enzymes, a multigene family within a tandemly repeated sequence.</title>
        <authorList>
            <person name="Burrows J.F."/>
            <person name="McGrattan M.J."/>
            <person name="Johnston J.A."/>
        </authorList>
    </citation>
    <scope>IDENTIFICATION</scope>
    <scope>NOMENCLATURE</scope>
</reference>
<reference key="3">
    <citation type="journal article" date="2006" name="BMC Genomics">
        <title>Hyaluronan- and RNA-binding deubiquitinating enzymes of USP17 family members associated with cell viability.</title>
        <authorList>
            <person name="Shin J.-M."/>
            <person name="Yoo K.-J."/>
            <person name="Kim M.-S."/>
            <person name="Kim D."/>
            <person name="Baek K.-H."/>
        </authorList>
    </citation>
    <scope>NOMENCLATURE</scope>
</reference>
<organism>
    <name type="scientific">Homo sapiens</name>
    <name type="common">Human</name>
    <dbReference type="NCBI Taxonomy" id="9606"/>
    <lineage>
        <taxon>Eukaryota</taxon>
        <taxon>Metazoa</taxon>
        <taxon>Chordata</taxon>
        <taxon>Craniata</taxon>
        <taxon>Vertebrata</taxon>
        <taxon>Euteleostomi</taxon>
        <taxon>Mammalia</taxon>
        <taxon>Eutheria</taxon>
        <taxon>Euarchontoglires</taxon>
        <taxon>Primates</taxon>
        <taxon>Haplorrhini</taxon>
        <taxon>Catarrhini</taxon>
        <taxon>Hominidae</taxon>
        <taxon>Homo</taxon>
    </lineage>
</organism>
<proteinExistence type="inferred from homology"/>